<keyword id="KW-0002">3D-structure</keyword>
<keyword id="KW-0274">FAD</keyword>
<keyword id="KW-0285">Flavoprotein</keyword>
<keyword id="KW-0489">Methyltransferase</keyword>
<keyword id="KW-0521">NADP</keyword>
<keyword id="KW-0545">Nucleotide biosynthesis</keyword>
<keyword id="KW-1185">Reference proteome</keyword>
<keyword id="KW-0808">Transferase</keyword>
<proteinExistence type="evidence at protein level"/>
<organism>
    <name type="scientific">Corynebacterium glutamicum (strain ATCC 13032 / DSM 20300 / JCM 1318 / BCRC 11384 / CCUG 27702 / LMG 3730 / NBRC 12168 / NCIMB 10025 / NRRL B-2784 / 534)</name>
    <dbReference type="NCBI Taxonomy" id="196627"/>
    <lineage>
        <taxon>Bacteria</taxon>
        <taxon>Bacillati</taxon>
        <taxon>Actinomycetota</taxon>
        <taxon>Actinomycetes</taxon>
        <taxon>Mycobacteriales</taxon>
        <taxon>Corynebacteriaceae</taxon>
        <taxon>Corynebacterium</taxon>
    </lineage>
</organism>
<gene>
    <name evidence="1" type="primary">thyX</name>
    <name type="ordered locus">Cgl1972</name>
    <name type="ordered locus">cg2162</name>
</gene>
<accession>P40111</accession>
<comment type="function">
    <text evidence="1">Catalyzes the reductive methylation of 2'-deoxyuridine-5'-monophosphate (dUMP) to 2'-deoxythymidine-5'-monophosphate (dTMP) while utilizing 5,10-methylenetetrahydrofolate (mTHF) as the methyl donor, and NADPH and FADH(2) as the reductant.</text>
</comment>
<comment type="catalytic activity">
    <reaction evidence="1">
        <text>dUMP + (6R)-5,10-methylene-5,6,7,8-tetrahydrofolate + NADPH + H(+) = dTMP + (6S)-5,6,7,8-tetrahydrofolate + NADP(+)</text>
        <dbReference type="Rhea" id="RHEA:29043"/>
        <dbReference type="ChEBI" id="CHEBI:15378"/>
        <dbReference type="ChEBI" id="CHEBI:15636"/>
        <dbReference type="ChEBI" id="CHEBI:57453"/>
        <dbReference type="ChEBI" id="CHEBI:57783"/>
        <dbReference type="ChEBI" id="CHEBI:58349"/>
        <dbReference type="ChEBI" id="CHEBI:63528"/>
        <dbReference type="ChEBI" id="CHEBI:246422"/>
        <dbReference type="EC" id="2.1.1.148"/>
    </reaction>
</comment>
<comment type="cofactor">
    <cofactor evidence="1">
        <name>FAD</name>
        <dbReference type="ChEBI" id="CHEBI:57692"/>
    </cofactor>
    <text evidence="1">Binds 4 FAD per tetramer. Each FAD binding site is formed by three monomers.</text>
</comment>
<comment type="pathway">
    <text evidence="1">Pyrimidine metabolism; dTTP biosynthesis.</text>
</comment>
<comment type="subunit">
    <text evidence="1">Homotetramer.</text>
</comment>
<comment type="similarity">
    <text evidence="1">Belongs to the thymidylate synthase ThyX family.</text>
</comment>
<dbReference type="EC" id="2.1.1.148" evidence="1"/>
<dbReference type="EMBL" id="Z21502">
    <property type="protein sequence ID" value="CAA79713.1"/>
    <property type="molecule type" value="Genomic_DNA"/>
</dbReference>
<dbReference type="EMBL" id="BA000036">
    <property type="protein sequence ID" value="BAB99365.1"/>
    <property type="molecule type" value="Genomic_DNA"/>
</dbReference>
<dbReference type="EMBL" id="BX927153">
    <property type="protein sequence ID" value="CAF20313.1"/>
    <property type="molecule type" value="Genomic_DNA"/>
</dbReference>
<dbReference type="PIR" id="B40626">
    <property type="entry name" value="B40626"/>
</dbReference>
<dbReference type="RefSeq" id="NP_601178.1">
    <property type="nucleotide sequence ID" value="NC_003450.3"/>
</dbReference>
<dbReference type="RefSeq" id="WP_011014793.1">
    <property type="nucleotide sequence ID" value="NC_006958.1"/>
</dbReference>
<dbReference type="PDB" id="3FNN">
    <property type="method" value="X-ray"/>
    <property type="resolution" value="2.30 A"/>
    <property type="chains" value="A=1-250"/>
</dbReference>
<dbReference type="PDB" id="3GE9">
    <property type="method" value="X-ray"/>
    <property type="resolution" value="2.61 A"/>
    <property type="chains" value="A=1-250"/>
</dbReference>
<dbReference type="PDBsum" id="3FNN"/>
<dbReference type="PDBsum" id="3GE9"/>
<dbReference type="SMR" id="P40111"/>
<dbReference type="STRING" id="196627.cg2162"/>
<dbReference type="GeneID" id="1019929"/>
<dbReference type="KEGG" id="cgb:cg2162"/>
<dbReference type="KEGG" id="cgl:Cgl1972"/>
<dbReference type="PATRIC" id="fig|196627.13.peg.1909"/>
<dbReference type="eggNOG" id="COG1351">
    <property type="taxonomic scope" value="Bacteria"/>
</dbReference>
<dbReference type="HOGENOM" id="CLU_077585_1_0_11"/>
<dbReference type="OrthoDB" id="9780625at2"/>
<dbReference type="BioCyc" id="CORYNE:G18NG-11564-MONOMER"/>
<dbReference type="UniPathway" id="UPA00575"/>
<dbReference type="EvolutionaryTrace" id="P40111"/>
<dbReference type="Proteomes" id="UP000000582">
    <property type="component" value="Chromosome"/>
</dbReference>
<dbReference type="Proteomes" id="UP000001009">
    <property type="component" value="Chromosome"/>
</dbReference>
<dbReference type="GO" id="GO:0050660">
    <property type="term" value="F:flavin adenine dinucleotide binding"/>
    <property type="evidence" value="ECO:0007669"/>
    <property type="project" value="InterPro"/>
</dbReference>
<dbReference type="GO" id="GO:0070402">
    <property type="term" value="F:NADPH binding"/>
    <property type="evidence" value="ECO:0007669"/>
    <property type="project" value="TreeGrafter"/>
</dbReference>
<dbReference type="GO" id="GO:0050797">
    <property type="term" value="F:thymidylate synthase (FAD) activity"/>
    <property type="evidence" value="ECO:0007669"/>
    <property type="project" value="UniProtKB-UniRule"/>
</dbReference>
<dbReference type="GO" id="GO:0004799">
    <property type="term" value="F:thymidylate synthase activity"/>
    <property type="evidence" value="ECO:0007669"/>
    <property type="project" value="TreeGrafter"/>
</dbReference>
<dbReference type="GO" id="GO:0006231">
    <property type="term" value="P:dTMP biosynthetic process"/>
    <property type="evidence" value="ECO:0007669"/>
    <property type="project" value="UniProtKB-UniRule"/>
</dbReference>
<dbReference type="GO" id="GO:0006235">
    <property type="term" value="P:dTTP biosynthetic process"/>
    <property type="evidence" value="ECO:0007669"/>
    <property type="project" value="UniProtKB-UniRule"/>
</dbReference>
<dbReference type="GO" id="GO:0032259">
    <property type="term" value="P:methylation"/>
    <property type="evidence" value="ECO:0007669"/>
    <property type="project" value="UniProtKB-KW"/>
</dbReference>
<dbReference type="CDD" id="cd20175">
    <property type="entry name" value="ThyX"/>
    <property type="match status" value="1"/>
</dbReference>
<dbReference type="Gene3D" id="3.30.70.3180">
    <property type="match status" value="1"/>
</dbReference>
<dbReference type="Gene3D" id="6.10.140.450">
    <property type="match status" value="1"/>
</dbReference>
<dbReference type="HAMAP" id="MF_01408">
    <property type="entry name" value="ThyX"/>
    <property type="match status" value="1"/>
</dbReference>
<dbReference type="InterPro" id="IPR003669">
    <property type="entry name" value="Thymidylate_synthase_ThyX"/>
</dbReference>
<dbReference type="InterPro" id="IPR036098">
    <property type="entry name" value="Thymidylate_synthase_ThyX_sf"/>
</dbReference>
<dbReference type="NCBIfam" id="TIGR02170">
    <property type="entry name" value="thyX"/>
    <property type="match status" value="1"/>
</dbReference>
<dbReference type="PANTHER" id="PTHR34934">
    <property type="entry name" value="FLAVIN-DEPENDENT THYMIDYLATE SYNTHASE"/>
    <property type="match status" value="1"/>
</dbReference>
<dbReference type="PANTHER" id="PTHR34934:SF1">
    <property type="entry name" value="FLAVIN-DEPENDENT THYMIDYLATE SYNTHASE"/>
    <property type="match status" value="1"/>
</dbReference>
<dbReference type="Pfam" id="PF02511">
    <property type="entry name" value="Thy1"/>
    <property type="match status" value="1"/>
</dbReference>
<dbReference type="SUPFAM" id="SSF69796">
    <property type="entry name" value="Thymidylate synthase-complementing protein Thy1"/>
    <property type="match status" value="1"/>
</dbReference>
<dbReference type="PROSITE" id="PS51331">
    <property type="entry name" value="THYX"/>
    <property type="match status" value="1"/>
</dbReference>
<name>THYX_CORGL</name>
<reference key="1">
    <citation type="journal article" date="1993" name="J. Bacteriol.">
        <title>A cluster of three genes (dapA, orf2, and dapB) of Brevibacterium lactofermentum encodes dihydrodipicolinate synthase, dihydrodipicolinate reductase, and a third polypeptide of unknown function.</title>
        <authorList>
            <person name="Pisabarro A."/>
            <person name="Malumbres M."/>
            <person name="Mateos L.M."/>
            <person name="Oguiza J.A."/>
            <person name="Martin J.F."/>
        </authorList>
    </citation>
    <scope>NUCLEOTIDE SEQUENCE [GENOMIC DNA]</scope>
    <source>
        <strain>ATCC 13869 / DSMZ 1412 / NCIMB 9567</strain>
    </source>
</reference>
<reference key="2">
    <citation type="journal article" date="2003" name="Appl. Microbiol. Biotechnol.">
        <title>The Corynebacterium glutamicum genome: features and impacts on biotechnological processes.</title>
        <authorList>
            <person name="Ikeda M."/>
            <person name="Nakagawa S."/>
        </authorList>
    </citation>
    <scope>NUCLEOTIDE SEQUENCE [LARGE SCALE GENOMIC DNA]</scope>
    <source>
        <strain>ATCC 13032 / DSM 20300 / JCM 1318 / BCRC 11384 / CCUG 27702 / LMG 3730 / NBRC 12168 / NCIMB 10025 / NRRL B-2784 / 534</strain>
    </source>
</reference>
<reference key="3">
    <citation type="journal article" date="2003" name="J. Biotechnol.">
        <title>The complete Corynebacterium glutamicum ATCC 13032 genome sequence and its impact on the production of L-aspartate-derived amino acids and vitamins.</title>
        <authorList>
            <person name="Kalinowski J."/>
            <person name="Bathe B."/>
            <person name="Bartels D."/>
            <person name="Bischoff N."/>
            <person name="Bott M."/>
            <person name="Burkovski A."/>
            <person name="Dusch N."/>
            <person name="Eggeling L."/>
            <person name="Eikmanns B.J."/>
            <person name="Gaigalat L."/>
            <person name="Goesmann A."/>
            <person name="Hartmann M."/>
            <person name="Huthmacher K."/>
            <person name="Kraemer R."/>
            <person name="Linke B."/>
            <person name="McHardy A.C."/>
            <person name="Meyer F."/>
            <person name="Moeckel B."/>
            <person name="Pfefferle W."/>
            <person name="Puehler A."/>
            <person name="Rey D.A."/>
            <person name="Rueckert C."/>
            <person name="Rupp O."/>
            <person name="Sahm H."/>
            <person name="Wendisch V.F."/>
            <person name="Wiegraebe I."/>
            <person name="Tauch A."/>
        </authorList>
    </citation>
    <scope>NUCLEOTIDE SEQUENCE [LARGE SCALE GENOMIC DNA]</scope>
    <source>
        <strain>ATCC 13032 / DSM 20300 / JCM 1318 / BCRC 11384 / CCUG 27702 / LMG 3730 / NBRC 12168 / NCIMB 10025 / NRRL B-2784 / 534</strain>
    </source>
</reference>
<evidence type="ECO:0000255" key="1">
    <source>
        <dbReference type="HAMAP-Rule" id="MF_01408"/>
    </source>
</evidence>
<evidence type="ECO:0000255" key="2">
    <source>
        <dbReference type="PROSITE-ProRule" id="PRU00661"/>
    </source>
</evidence>
<evidence type="ECO:0000305" key="3"/>
<evidence type="ECO:0007829" key="4">
    <source>
        <dbReference type="PDB" id="3FNN"/>
    </source>
</evidence>
<feature type="chain" id="PRO_0000175560" description="Flavin-dependent thymidylate synthase">
    <location>
        <begin position="1"/>
        <end position="250"/>
    </location>
</feature>
<feature type="domain" description="ThyX" evidence="2">
    <location>
        <begin position="7"/>
        <end position="233"/>
    </location>
</feature>
<feature type="short sequence motif" description="ThyX motif" evidence="1">
    <location>
        <begin position="95"/>
        <end position="105"/>
    </location>
</feature>
<feature type="active site" description="Involved in ionization of N3 of dUMP, leading to its activation" evidence="1">
    <location>
        <position position="199"/>
    </location>
</feature>
<feature type="binding site" evidence="1">
    <location>
        <begin position="92"/>
        <end position="95"/>
    </location>
    <ligand>
        <name>dUMP</name>
        <dbReference type="ChEBI" id="CHEBI:246422"/>
        <note>ligand shared between dimeric partners</note>
    </ligand>
</feature>
<feature type="binding site" evidence="1">
    <location>
        <begin position="95"/>
        <end position="97"/>
    </location>
    <ligand>
        <name>FAD</name>
        <dbReference type="ChEBI" id="CHEBI:57692"/>
        <note>ligand shared between neighboring subunits</note>
    </ligand>
</feature>
<feature type="binding site" description="in other chain" evidence="1">
    <location>
        <begin position="103"/>
        <end position="107"/>
    </location>
    <ligand>
        <name>dUMP</name>
        <dbReference type="ChEBI" id="CHEBI:246422"/>
        <note>ligand shared between dimeric partners</note>
    </ligand>
</feature>
<feature type="binding site" evidence="1">
    <location>
        <position position="103"/>
    </location>
    <ligand>
        <name>FAD</name>
        <dbReference type="ChEBI" id="CHEBI:57692"/>
        <note>ligand shared between neighboring subunits</note>
    </ligand>
</feature>
<feature type="binding site" description="in other chain" evidence="1">
    <location>
        <position position="172"/>
    </location>
    <ligand>
        <name>dUMP</name>
        <dbReference type="ChEBI" id="CHEBI:246422"/>
        <note>ligand shared between dimeric partners</note>
    </ligand>
</feature>
<feature type="binding site" evidence="1">
    <location>
        <begin position="188"/>
        <end position="190"/>
    </location>
    <ligand>
        <name>FAD</name>
        <dbReference type="ChEBI" id="CHEBI:57692"/>
        <note>ligand shared between neighboring subunits</note>
    </ligand>
</feature>
<feature type="binding site" evidence="1">
    <location>
        <position position="194"/>
    </location>
    <ligand>
        <name>FAD</name>
        <dbReference type="ChEBI" id="CHEBI:57692"/>
        <note>ligand shared between neighboring subunits</note>
    </ligand>
</feature>
<feature type="binding site" evidence="1">
    <location>
        <position position="199"/>
    </location>
    <ligand>
        <name>dUMP</name>
        <dbReference type="ChEBI" id="CHEBI:246422"/>
        <note>ligand shared between dimeric partners</note>
    </ligand>
</feature>
<feature type="sequence conflict" description="In Ref. 1; CAA79713." evidence="3" ref="1">
    <original>E</original>
    <variation>G</variation>
    <location>
        <position position="214"/>
    </location>
</feature>
<feature type="strand" evidence="4">
    <location>
        <begin position="8"/>
        <end position="14"/>
    </location>
</feature>
<feature type="helix" evidence="4">
    <location>
        <begin position="32"/>
        <end position="44"/>
    </location>
</feature>
<feature type="helix" evidence="4">
    <location>
        <begin position="57"/>
        <end position="66"/>
    </location>
</feature>
<feature type="helix" evidence="4">
    <location>
        <begin position="71"/>
        <end position="75"/>
    </location>
</feature>
<feature type="strand" evidence="4">
    <location>
        <begin position="77"/>
        <end position="86"/>
    </location>
</feature>
<feature type="helix" evidence="4">
    <location>
        <begin position="87"/>
        <end position="93"/>
    </location>
</feature>
<feature type="strand" evidence="4">
    <location>
        <begin position="99"/>
        <end position="103"/>
    </location>
</feature>
<feature type="helix" evidence="4">
    <location>
        <begin position="120"/>
        <end position="123"/>
    </location>
</feature>
<feature type="helix" evidence="4">
    <location>
        <begin position="126"/>
        <end position="152"/>
    </location>
</feature>
<feature type="helix" evidence="4">
    <location>
        <begin position="165"/>
        <end position="171"/>
    </location>
</feature>
<feature type="helix" evidence="4">
    <location>
        <begin position="172"/>
        <end position="174"/>
    </location>
</feature>
<feature type="strand" evidence="4">
    <location>
        <begin position="179"/>
        <end position="188"/>
    </location>
</feature>
<feature type="helix" evidence="4">
    <location>
        <begin position="189"/>
        <end position="199"/>
    </location>
</feature>
<feature type="helix" evidence="4">
    <location>
        <begin position="206"/>
        <end position="222"/>
    </location>
</feature>
<feature type="helix" evidence="4">
    <location>
        <begin position="224"/>
        <end position="227"/>
    </location>
</feature>
<feature type="strand" evidence="4">
    <location>
        <begin position="231"/>
        <end position="234"/>
    </location>
</feature>
<feature type="strand" evidence="4">
    <location>
        <begin position="240"/>
        <end position="243"/>
    </location>
</feature>
<protein>
    <recommendedName>
        <fullName evidence="1">Flavin-dependent thymidylate synthase</fullName>
        <shortName evidence="1">FDTS</shortName>
        <ecNumber evidence="1">2.1.1.148</ecNumber>
    </recommendedName>
    <alternativeName>
        <fullName evidence="1">FAD-dependent thymidylate synthase</fullName>
    </alternativeName>
    <alternativeName>
        <fullName evidence="1">Thymidylate synthase ThyX</fullName>
        <shortName evidence="1">TS</shortName>
        <shortName evidence="1">TSase</shortName>
    </alternativeName>
</protein>
<sequence length="250" mass="28065">MAEQVKLSVELIACSSFTPPADVEWSTDVEGAEALVEFAGRACYETFDKPNPRTASNAAYLRHIMEVGHTALLEHANATMYIRGISRSATHELVRHRHFSFSQLSQRFVHSGESEVVVPTLIDEDPQLRELFMHAMDESRFAFNELLNALEEKLGDEPNALLRKKQARQAARAVLPNATESRIVVSGNFRTWRHFIGMRASEHADVEIREVAVECLRKLQVAAPTVFGDFEIETLADGSQMATSPYVMDF</sequence>